<protein>
    <recommendedName>
        <fullName evidence="1">GMP synthase [glutamine-hydrolyzing]</fullName>
        <ecNumber evidence="1">6.3.5.2</ecNumber>
    </recommendedName>
    <alternativeName>
        <fullName evidence="1">GMP synthetase</fullName>
    </alternativeName>
    <alternativeName>
        <fullName evidence="1">Glutamine amidotransferase</fullName>
    </alternativeName>
</protein>
<sequence>MTDIHNHKILILDFGSQYTQLIARRVREVGVFCEIFPHDVAADFIKNYQAKGIILSGGPESVYDSDVKAPEIVFELGVPVLGICYGMQTMVMQHGGEVKGADQSEFGKAIINILNLTNNIFSNMEHEQLVWMSHSDKVTQTGEHFEIIASSTNAPVAAVAHKNKPFFGVQFHPETTHTENGKQIIENFVVNICGCDTLWNIENIIENDIKEIKQKVGTDKVILGLSGGVDSSVVAAILHQAIGDQLTCIFVDTGLLRLNEGDQVMQVFAEHMDINVIRINAKNRFLDALRGICDPEQKRKIIGKLFVDIFDEEAAKIENAKWLAQGTIYSDVIESAGNNQSKAHVIKSHHNVGGLPKEMKLKLLEPLRELFKDEVRKLGLGLGLPYNMLYRHPFPGPGLGVRILGEIKKEYVETLQKADAIFTEELYKHNLYHDVSQAFGVFLPIKSVGVVGDQRRYEYVIALRAVVSIDFMTATWANLPYDFLSLVSNRIVNEVKQVSRVVYDVTGKPPGTIEWE</sequence>
<gene>
    <name evidence="1" type="primary">guaA</name>
    <name type="ordered locus">FTH_1046</name>
</gene>
<evidence type="ECO:0000255" key="1">
    <source>
        <dbReference type="HAMAP-Rule" id="MF_00344"/>
    </source>
</evidence>
<dbReference type="EC" id="6.3.5.2" evidence="1"/>
<dbReference type="EMBL" id="CP000437">
    <property type="protein sequence ID" value="ABI82934.1"/>
    <property type="molecule type" value="Genomic_DNA"/>
</dbReference>
<dbReference type="RefSeq" id="WP_010031593.1">
    <property type="nucleotide sequence ID" value="NC_017463.1"/>
</dbReference>
<dbReference type="SMR" id="Q0BLV0"/>
<dbReference type="MEROPS" id="C26.957"/>
<dbReference type="KEGG" id="fth:FTH_1046"/>
<dbReference type="UniPathway" id="UPA00189">
    <property type="reaction ID" value="UER00296"/>
</dbReference>
<dbReference type="GO" id="GO:0005829">
    <property type="term" value="C:cytosol"/>
    <property type="evidence" value="ECO:0007669"/>
    <property type="project" value="TreeGrafter"/>
</dbReference>
<dbReference type="GO" id="GO:0005524">
    <property type="term" value="F:ATP binding"/>
    <property type="evidence" value="ECO:0007669"/>
    <property type="project" value="UniProtKB-UniRule"/>
</dbReference>
<dbReference type="GO" id="GO:0003921">
    <property type="term" value="F:GMP synthase activity"/>
    <property type="evidence" value="ECO:0007669"/>
    <property type="project" value="InterPro"/>
</dbReference>
<dbReference type="CDD" id="cd01742">
    <property type="entry name" value="GATase1_GMP_Synthase"/>
    <property type="match status" value="1"/>
</dbReference>
<dbReference type="CDD" id="cd01997">
    <property type="entry name" value="GMP_synthase_C"/>
    <property type="match status" value="1"/>
</dbReference>
<dbReference type="FunFam" id="3.30.300.10:FF:000002">
    <property type="entry name" value="GMP synthase [glutamine-hydrolyzing]"/>
    <property type="match status" value="1"/>
</dbReference>
<dbReference type="FunFam" id="3.40.50.620:FF:000001">
    <property type="entry name" value="GMP synthase [glutamine-hydrolyzing]"/>
    <property type="match status" value="1"/>
</dbReference>
<dbReference type="FunFam" id="3.40.50.880:FF:000001">
    <property type="entry name" value="GMP synthase [glutamine-hydrolyzing]"/>
    <property type="match status" value="1"/>
</dbReference>
<dbReference type="Gene3D" id="3.30.300.10">
    <property type="match status" value="1"/>
</dbReference>
<dbReference type="Gene3D" id="3.40.50.880">
    <property type="match status" value="1"/>
</dbReference>
<dbReference type="Gene3D" id="3.40.50.620">
    <property type="entry name" value="HUPs"/>
    <property type="match status" value="1"/>
</dbReference>
<dbReference type="HAMAP" id="MF_00344">
    <property type="entry name" value="GMP_synthase"/>
    <property type="match status" value="1"/>
</dbReference>
<dbReference type="InterPro" id="IPR029062">
    <property type="entry name" value="Class_I_gatase-like"/>
</dbReference>
<dbReference type="InterPro" id="IPR017926">
    <property type="entry name" value="GATASE"/>
</dbReference>
<dbReference type="InterPro" id="IPR001674">
    <property type="entry name" value="GMP_synth_C"/>
</dbReference>
<dbReference type="InterPro" id="IPR004739">
    <property type="entry name" value="GMP_synth_GATase"/>
</dbReference>
<dbReference type="InterPro" id="IPR022955">
    <property type="entry name" value="GMP_synthase"/>
</dbReference>
<dbReference type="InterPro" id="IPR025777">
    <property type="entry name" value="GMPS_ATP_PPase_dom"/>
</dbReference>
<dbReference type="InterPro" id="IPR022310">
    <property type="entry name" value="NAD/GMP_synthase"/>
</dbReference>
<dbReference type="InterPro" id="IPR014729">
    <property type="entry name" value="Rossmann-like_a/b/a_fold"/>
</dbReference>
<dbReference type="NCBIfam" id="TIGR00884">
    <property type="entry name" value="guaA_Cterm"/>
    <property type="match status" value="1"/>
</dbReference>
<dbReference type="NCBIfam" id="TIGR00888">
    <property type="entry name" value="guaA_Nterm"/>
    <property type="match status" value="1"/>
</dbReference>
<dbReference type="NCBIfam" id="NF000848">
    <property type="entry name" value="PRK00074.1"/>
    <property type="match status" value="1"/>
</dbReference>
<dbReference type="PANTHER" id="PTHR11922:SF2">
    <property type="entry name" value="GMP SYNTHASE [GLUTAMINE-HYDROLYZING]"/>
    <property type="match status" value="1"/>
</dbReference>
<dbReference type="PANTHER" id="PTHR11922">
    <property type="entry name" value="GMP SYNTHASE-RELATED"/>
    <property type="match status" value="1"/>
</dbReference>
<dbReference type="Pfam" id="PF00117">
    <property type="entry name" value="GATase"/>
    <property type="match status" value="1"/>
</dbReference>
<dbReference type="Pfam" id="PF00958">
    <property type="entry name" value="GMP_synt_C"/>
    <property type="match status" value="1"/>
</dbReference>
<dbReference type="Pfam" id="PF02540">
    <property type="entry name" value="NAD_synthase"/>
    <property type="match status" value="1"/>
</dbReference>
<dbReference type="PRINTS" id="PR00097">
    <property type="entry name" value="ANTSNTHASEII"/>
</dbReference>
<dbReference type="PRINTS" id="PR00096">
    <property type="entry name" value="GATASE"/>
</dbReference>
<dbReference type="SUPFAM" id="SSF52402">
    <property type="entry name" value="Adenine nucleotide alpha hydrolases-like"/>
    <property type="match status" value="1"/>
</dbReference>
<dbReference type="SUPFAM" id="SSF52317">
    <property type="entry name" value="Class I glutamine amidotransferase-like"/>
    <property type="match status" value="1"/>
</dbReference>
<dbReference type="SUPFAM" id="SSF54810">
    <property type="entry name" value="GMP synthetase C-terminal dimerisation domain"/>
    <property type="match status" value="1"/>
</dbReference>
<dbReference type="PROSITE" id="PS51273">
    <property type="entry name" value="GATASE_TYPE_1"/>
    <property type="match status" value="1"/>
</dbReference>
<dbReference type="PROSITE" id="PS51553">
    <property type="entry name" value="GMPS_ATP_PPASE"/>
    <property type="match status" value="1"/>
</dbReference>
<reference key="1">
    <citation type="journal article" date="2006" name="J. Bacteriol.">
        <title>Chromosome rearrangement and diversification of Francisella tularensis revealed by the type B (OSU18) genome sequence.</title>
        <authorList>
            <person name="Petrosino J.F."/>
            <person name="Xiang Q."/>
            <person name="Karpathy S.E."/>
            <person name="Jiang H."/>
            <person name="Yerrapragada S."/>
            <person name="Liu Y."/>
            <person name="Gioia J."/>
            <person name="Hemphill L."/>
            <person name="Gonzalez A."/>
            <person name="Raghavan T.M."/>
            <person name="Uzman A."/>
            <person name="Fox G.E."/>
            <person name="Highlander S."/>
            <person name="Reichard M."/>
            <person name="Morton R.J."/>
            <person name="Clinkenbeard K.D."/>
            <person name="Weinstock G.M."/>
        </authorList>
    </citation>
    <scope>NUCLEOTIDE SEQUENCE [LARGE SCALE GENOMIC DNA]</scope>
    <source>
        <strain>OSU18</strain>
    </source>
</reference>
<name>GUAA_FRATO</name>
<feature type="chain" id="PRO_1000120306" description="GMP synthase [glutamine-hydrolyzing]">
    <location>
        <begin position="1"/>
        <end position="516"/>
    </location>
</feature>
<feature type="domain" description="Glutamine amidotransferase type-1" evidence="1">
    <location>
        <begin position="8"/>
        <end position="198"/>
    </location>
</feature>
<feature type="domain" description="GMPS ATP-PPase" evidence="1">
    <location>
        <begin position="199"/>
        <end position="391"/>
    </location>
</feature>
<feature type="active site" description="Nucleophile" evidence="1">
    <location>
        <position position="84"/>
    </location>
</feature>
<feature type="active site" evidence="1">
    <location>
        <position position="172"/>
    </location>
</feature>
<feature type="active site" evidence="1">
    <location>
        <position position="174"/>
    </location>
</feature>
<feature type="binding site" evidence="1">
    <location>
        <begin position="226"/>
        <end position="232"/>
    </location>
    <ligand>
        <name>ATP</name>
        <dbReference type="ChEBI" id="CHEBI:30616"/>
    </ligand>
</feature>
<proteinExistence type="inferred from homology"/>
<keyword id="KW-0067">ATP-binding</keyword>
<keyword id="KW-0315">Glutamine amidotransferase</keyword>
<keyword id="KW-0332">GMP biosynthesis</keyword>
<keyword id="KW-0436">Ligase</keyword>
<keyword id="KW-0547">Nucleotide-binding</keyword>
<keyword id="KW-0658">Purine biosynthesis</keyword>
<comment type="function">
    <text evidence="1">Catalyzes the synthesis of GMP from XMP.</text>
</comment>
<comment type="catalytic activity">
    <reaction evidence="1">
        <text>XMP + L-glutamine + ATP + H2O = GMP + L-glutamate + AMP + diphosphate + 2 H(+)</text>
        <dbReference type="Rhea" id="RHEA:11680"/>
        <dbReference type="ChEBI" id="CHEBI:15377"/>
        <dbReference type="ChEBI" id="CHEBI:15378"/>
        <dbReference type="ChEBI" id="CHEBI:29985"/>
        <dbReference type="ChEBI" id="CHEBI:30616"/>
        <dbReference type="ChEBI" id="CHEBI:33019"/>
        <dbReference type="ChEBI" id="CHEBI:57464"/>
        <dbReference type="ChEBI" id="CHEBI:58115"/>
        <dbReference type="ChEBI" id="CHEBI:58359"/>
        <dbReference type="ChEBI" id="CHEBI:456215"/>
        <dbReference type="EC" id="6.3.5.2"/>
    </reaction>
</comment>
<comment type="pathway">
    <text evidence="1">Purine metabolism; GMP biosynthesis; GMP from XMP (L-Gln route): step 1/1.</text>
</comment>
<comment type="subunit">
    <text evidence="1">Homodimer.</text>
</comment>
<organism>
    <name type="scientific">Francisella tularensis subsp. holarctica (strain OSU18)</name>
    <dbReference type="NCBI Taxonomy" id="393011"/>
    <lineage>
        <taxon>Bacteria</taxon>
        <taxon>Pseudomonadati</taxon>
        <taxon>Pseudomonadota</taxon>
        <taxon>Gammaproteobacteria</taxon>
        <taxon>Thiotrichales</taxon>
        <taxon>Francisellaceae</taxon>
        <taxon>Francisella</taxon>
    </lineage>
</organism>
<accession>Q0BLV0</accession>